<evidence type="ECO:0000255" key="1"/>
<evidence type="ECO:0000255" key="2">
    <source>
        <dbReference type="PROSITE-ProRule" id="PRU00768"/>
    </source>
</evidence>
<evidence type="ECO:0000256" key="3">
    <source>
        <dbReference type="SAM" id="MobiDB-lite"/>
    </source>
</evidence>
<evidence type="ECO:0000269" key="4">
    <source>
    </source>
</evidence>
<evidence type="ECO:0000269" key="5">
    <source>
    </source>
</evidence>
<evidence type="ECO:0000269" key="6">
    <source>
    </source>
</evidence>
<evidence type="ECO:0000269" key="7">
    <source>
    </source>
</evidence>
<evidence type="ECO:0000269" key="8">
    <source>
    </source>
</evidence>
<evidence type="ECO:0000269" key="9">
    <source>
    </source>
</evidence>
<evidence type="ECO:0000303" key="10">
    <source>
    </source>
</evidence>
<evidence type="ECO:0000305" key="11"/>
<evidence type="ECO:0000305" key="12">
    <source>
    </source>
</evidence>
<evidence type="ECO:0000305" key="13">
    <source>
    </source>
</evidence>
<evidence type="ECO:0000305" key="14">
    <source>
    </source>
</evidence>
<evidence type="ECO:0000312" key="15">
    <source>
        <dbReference type="PomBase" id="SPCC1020.02"/>
    </source>
</evidence>
<comment type="function">
    <text evidence="4 6 7 8">Acts as a component of the outer kinetochore KNL1 complex that serves as a docking point for spindle assembly checkpoint components and mediates microtubule-kinetochore interactions (PubMed:22521786, PubMed:22660415). Kinetochores, consisting of a centromere-associated inner segment and a microtubule-contacting outer segment, play a crucial role in chromosome segregation by mediating the physical connection between centromeric DNA and spindle microtubules (PubMed:16079914, PubMed:17035632). The outer kinetochore is made up of the ten-subunit KMN network, comprising the MIS12, NDC80 and KNL1 complexes, and auxiliary microtubule-associated components; together they connect the outer kinetochore with the inner kinetochore, bind microtubules, and mediate interactions with mitotic checkpoint proteins that delay anaphase until chromosomes are bioriented on the spindle (PubMed:16079914, PubMed:17035632, PubMed:22521786, PubMed:22660415). Recruits the BUB1-BUB3 complex to kinetochores when phosphorylated by mph1/mps1, to support spindle assembly checkpoint signaling (PubMed:22521786, PubMed:22660415). Functions both in mitotic and in meiotic chromosome segregation (PubMed:17035632).</text>
</comment>
<comment type="subunit">
    <text evidence="4 6 7 8 9 14">Component of the KNL1/SPC105 complex composed of at least spc7 and sos7 (Probable). Part of the outer kinetochore KMN network that includes the KNL1, MIS12 and NDC80 complexes (PubMed:16079914, PubMed:17035632). Interacts (via C-terminus) with sos7 (via C-terminus); the interaction is direct (PubMed:22711988). Interacts (when phosphorylated on MELT motifs) with bub1 and bub3; to recruit the BUB1-BUB3 complex to the kinetochore (PubMed:22521786, PubMed:22660415).</text>
</comment>
<comment type="interaction">
    <interactant intactId="EBI-1002205">
        <id>O59757</id>
    </interactant>
    <interactant intactId="EBI-1002268">
        <id>Q10113</id>
        <label>mal3</label>
    </interactant>
    <organismsDiffer>false</organismsDiffer>
    <experiments>2</experiments>
</comment>
<comment type="subcellular location">
    <subcellularLocation>
        <location evidence="5">Nucleus</location>
    </subcellularLocation>
    <subcellularLocation>
        <location evidence="5">Chromosome</location>
        <location evidence="5">Centromere</location>
        <location evidence="5">Kinetochore</location>
    </subcellularLocation>
</comment>
<comment type="PTM">
    <text evidence="7 8">Phosphorylation of threonine residues in the MELT motifs by mph1/mps1 leads to recruitment of bub1 and bub3 to the kinetochore, and is required to maintain spindle assembly checkpoint signaling.</text>
</comment>
<name>KNL1_SCHPO</name>
<organism>
    <name type="scientific">Schizosaccharomyces pombe (strain 972 / ATCC 24843)</name>
    <name type="common">Fission yeast</name>
    <dbReference type="NCBI Taxonomy" id="284812"/>
    <lineage>
        <taxon>Eukaryota</taxon>
        <taxon>Fungi</taxon>
        <taxon>Dikarya</taxon>
        <taxon>Ascomycota</taxon>
        <taxon>Taphrinomycotina</taxon>
        <taxon>Schizosaccharomycetes</taxon>
        <taxon>Schizosaccharomycetales</taxon>
        <taxon>Schizosaccharomycetaceae</taxon>
        <taxon>Schizosaccharomyces</taxon>
    </lineage>
</organism>
<sequence length="1364" mass="153593">MPTSPRRNSIATTDNVIGRNKSRKRPHSLGGPGALQELKEHTNPAKGILKSYSSFSVDPAFTGDEDFNDIHTQINNTVIGISSNVMAASKRLQMEDLQQLSRETSRKSLNRRVSFASHARVRWYPKDHQSDSEKSTSNHSTPERTFASDAKNHSPKGPTTTSFSRNETQSSPHSHSASIISDGSDMDIASPIRSTESDMVSEALNAGHPPPSLYPENDDLSIQNPTKALPEAEKALDVHDATREQVNDREETNMDLTIQFQEADSFLSHSESIKGLSSSEQGTVYSLKASHDPSNQTQLSSPNKSSSPTSIEISDFSKNNENHDQSENKEEEEDMMLTRPIEIPQHFSPIARPLTSQEAIVDMDITSNNINLSPVSHFSNGLDLQNLEEAPMNLTRPINANPHLTNHSPNDLTNGEEEMDTTSAFNIENSHLTLLSPIRPSSRSMEEQIMDLTQPISSTNAPTHLNEDDLNQFTSNISSSSKPRKDNNKTANSSKPIPDSEDFMDITRPFNILSPSKEALSEEQPMELTSTVFPCENSTSHLEVEEAAMDETVAFQIRGNNVELPSADKENAEREEIPSYSDKSENFNTTSFTNHERSPNGNNNLKFSKDPNSSSPSRHVVATPTDKLGTRKRRLRYSTSSFDQSTLRRNRLATIRNARKSISTLNDRELLPVNFFEKKVNSGLYKSVERSENYRLGATPLTAEKPFTTEKPLSSLPEEVSRQPTDDKGEQVSNADVDSGLSKTERLTIQQTNEIKHVPTNTTSSVKLPQQPSNEDEKERITTADYADSTSLERLESQEPNRNELVQVGSSNAGNTTSVGMNEHEKSPVKLSKGVSNVDTSLGASTINTNILNQDSGPNEEIPVGNEPEFDTMPTLPNVEPISLSDFLKMTGIEFLDNLTIAKRRETLLPNAEENKKCSIQELLESFYIQFPLLELYKFSCQQLQDYIAEGKDFVTKIEEETLKENPLLFYEYRKASSDMRVLMDSQFLMMKTFARLQAKGDWYEWREGLMQGIKHELNLNLTGMQRSLTHLMDVANVIHPYAQEIQERYNGSITTVQTLKKQKEFANQYDSTLLAQAQEKLEKLKVEVERRRRLLSEKEERRKELAIKIEQVTNSCSDLELRTNAEQDFYAKNQDFEFDEIKRYEEQLLNLKNELGWTIVSLTAGGIKLATNNTALSPYSAEVTVEILRQNFQVNVDIACKFPNESNACSSNVLEHVASSFSKWHSKVFSRNLRLLKKYLNDVSICWEQIVYLVQDFQRLWYHWPFLSVENDDKSIIINVELYLRSVSSKVKVVFGLPIDTIYQTTEVGKFYASTSVAVKQMYAESEGDSYVSEVLNTLSEVVHCTSTYALSSACLTVWNKYS</sequence>
<keyword id="KW-0131">Cell cycle</keyword>
<keyword id="KW-0132">Cell division</keyword>
<keyword id="KW-0137">Centromere</keyword>
<keyword id="KW-0158">Chromosome</keyword>
<keyword id="KW-0175">Coiled coil</keyword>
<keyword id="KW-0995">Kinetochore</keyword>
<keyword id="KW-0469">Meiosis</keyword>
<keyword id="KW-0498">Mitosis</keyword>
<keyword id="KW-0539">Nucleus</keyword>
<keyword id="KW-0597">Phosphoprotein</keyword>
<keyword id="KW-1185">Reference proteome</keyword>
<protein>
    <recommendedName>
        <fullName evidence="11">Outer kinetochore KNL1 complex subunit spc7</fullName>
    </recommendedName>
    <alternativeName>
        <fullName>Kinetochore protein spc7</fullName>
    </alternativeName>
    <alternativeName>
        <fullName>NMS complex subunit spc7</fullName>
    </alternativeName>
</protein>
<proteinExistence type="evidence at protein level"/>
<dbReference type="EMBL" id="CU329672">
    <property type="protein sequence ID" value="CAA18990.1"/>
    <property type="molecule type" value="Genomic_DNA"/>
</dbReference>
<dbReference type="PIR" id="T40839">
    <property type="entry name" value="T40839"/>
</dbReference>
<dbReference type="RefSeq" id="NP_587958.1">
    <property type="nucleotide sequence ID" value="NM_001022949.2"/>
</dbReference>
<dbReference type="SMR" id="O59757"/>
<dbReference type="BioGRID" id="275727">
    <property type="interactions" value="47"/>
</dbReference>
<dbReference type="DIP" id="DIP-35340N"/>
<dbReference type="FunCoup" id="O59757">
    <property type="interactions" value="77"/>
</dbReference>
<dbReference type="IntAct" id="O59757">
    <property type="interactions" value="5"/>
</dbReference>
<dbReference type="STRING" id="284812.O59757"/>
<dbReference type="iPTMnet" id="O59757"/>
<dbReference type="PaxDb" id="4896-SPCC1020.02.1"/>
<dbReference type="EnsemblFungi" id="SPCC1020.02.1">
    <property type="protein sequence ID" value="SPCC1020.02.1:pep"/>
    <property type="gene ID" value="SPCC1020.02"/>
</dbReference>
<dbReference type="GeneID" id="2539155"/>
<dbReference type="KEGG" id="spo:2539155"/>
<dbReference type="PomBase" id="SPCC1020.02">
    <property type="gene designation" value="spc7"/>
</dbReference>
<dbReference type="VEuPathDB" id="FungiDB:SPCC1020.02"/>
<dbReference type="eggNOG" id="ENOG502S20P">
    <property type="taxonomic scope" value="Eukaryota"/>
</dbReference>
<dbReference type="HOGENOM" id="CLU_256785_0_0_1"/>
<dbReference type="InParanoid" id="O59757"/>
<dbReference type="OMA" id="CAMDETE"/>
<dbReference type="PhylomeDB" id="O59757"/>
<dbReference type="PRO" id="PR:O59757"/>
<dbReference type="Proteomes" id="UP000002485">
    <property type="component" value="Chromosome III"/>
</dbReference>
<dbReference type="GO" id="GO:0000779">
    <property type="term" value="C:condensed chromosome, centromeric region"/>
    <property type="evidence" value="ECO:0000314"/>
    <property type="project" value="PomBase"/>
</dbReference>
<dbReference type="GO" id="GO:0000776">
    <property type="term" value="C:kinetochore"/>
    <property type="evidence" value="ECO:0000314"/>
    <property type="project" value="PomBase"/>
</dbReference>
<dbReference type="GO" id="GO:0180019">
    <property type="term" value="C:Knl1/Spc105 complex"/>
    <property type="evidence" value="ECO:0000250"/>
    <property type="project" value="UniProtKB"/>
</dbReference>
<dbReference type="GO" id="GO:0005634">
    <property type="term" value="C:nucleus"/>
    <property type="evidence" value="ECO:0007669"/>
    <property type="project" value="UniProtKB-SubCell"/>
</dbReference>
<dbReference type="GO" id="GO:0000940">
    <property type="term" value="C:outer kinetochore"/>
    <property type="evidence" value="ECO:0000314"/>
    <property type="project" value="PomBase"/>
</dbReference>
<dbReference type="GO" id="GO:0140483">
    <property type="term" value="F:kinetochore adaptor activity"/>
    <property type="evidence" value="ECO:0000353"/>
    <property type="project" value="PomBase"/>
</dbReference>
<dbReference type="GO" id="GO:0051010">
    <property type="term" value="F:microtubule plus-end binding"/>
    <property type="evidence" value="ECO:0000304"/>
    <property type="project" value="PomBase"/>
</dbReference>
<dbReference type="GO" id="GO:0035591">
    <property type="term" value="F:signaling adaptor activity"/>
    <property type="evidence" value="ECO:0000269"/>
    <property type="project" value="PomBase"/>
</dbReference>
<dbReference type="GO" id="GO:0051315">
    <property type="term" value="P:attachment of mitotic spindle microtubules to kinetochore"/>
    <property type="evidence" value="ECO:0000315"/>
    <property type="project" value="PomBase"/>
</dbReference>
<dbReference type="GO" id="GO:0051301">
    <property type="term" value="P:cell division"/>
    <property type="evidence" value="ECO:0007669"/>
    <property type="project" value="UniProtKB-KW"/>
</dbReference>
<dbReference type="GO" id="GO:1902426">
    <property type="term" value="P:deactivation of mitotic spindle assembly checkpoint"/>
    <property type="evidence" value="ECO:0000315"/>
    <property type="project" value="PomBase"/>
</dbReference>
<dbReference type="GO" id="GO:0031619">
    <property type="term" value="P:homologous chromosome orientation in meiotic metaphase I"/>
    <property type="evidence" value="ECO:0000250"/>
    <property type="project" value="UniProtKB"/>
</dbReference>
<dbReference type="GO" id="GO:1990813">
    <property type="term" value="P:meiotic centromeric cohesion protection in anaphase I"/>
    <property type="evidence" value="ECO:0000315"/>
    <property type="project" value="PomBase"/>
</dbReference>
<dbReference type="GO" id="GO:1990758">
    <property type="term" value="P:mitotic sister chromatid biorientation"/>
    <property type="evidence" value="ECO:0000315"/>
    <property type="project" value="PomBase"/>
</dbReference>
<dbReference type="GO" id="GO:0007094">
    <property type="term" value="P:mitotic spindle assembly checkpoint signaling"/>
    <property type="evidence" value="ECO:0000315"/>
    <property type="project" value="PomBase"/>
</dbReference>
<dbReference type="GO" id="GO:1905326">
    <property type="term" value="P:positive regulation of meiosis I spindle assembly checkpoint"/>
    <property type="evidence" value="ECO:0000250"/>
    <property type="project" value="UniProtKB"/>
</dbReference>
<dbReference type="GO" id="GO:0034501">
    <property type="term" value="P:protein localization to kinetochore"/>
    <property type="evidence" value="ECO:0000318"/>
    <property type="project" value="GO_Central"/>
</dbReference>
<dbReference type="InterPro" id="IPR040850">
    <property type="entry name" value="Knl1_RWD_C"/>
</dbReference>
<dbReference type="InterPro" id="IPR033338">
    <property type="entry name" value="Spc105/Spc7"/>
</dbReference>
<dbReference type="InterPro" id="IPR013253">
    <property type="entry name" value="Spc7_domain"/>
</dbReference>
<dbReference type="PANTHER" id="PTHR28260">
    <property type="entry name" value="SPINDLE POLE BODY COMPONENT SPC105"/>
    <property type="match status" value="1"/>
</dbReference>
<dbReference type="PANTHER" id="PTHR28260:SF1">
    <property type="entry name" value="SPINDLE POLE BODY COMPONENT SPC105"/>
    <property type="match status" value="1"/>
</dbReference>
<dbReference type="Pfam" id="PF18210">
    <property type="entry name" value="Knl1_RWD_C"/>
    <property type="match status" value="1"/>
</dbReference>
<dbReference type="Pfam" id="PF08317">
    <property type="entry name" value="Spc7"/>
    <property type="match status" value="1"/>
</dbReference>
<dbReference type="SMART" id="SM00787">
    <property type="entry name" value="Spc7"/>
    <property type="match status" value="1"/>
</dbReference>
<gene>
    <name evidence="15" type="primary">spc7</name>
    <name evidence="10" type="synonym">knl1</name>
    <name evidence="10" type="synonym">spc105</name>
    <name evidence="15" type="ORF">SPCC1020.02</name>
</gene>
<reference key="1">
    <citation type="journal article" date="2002" name="Nature">
        <title>The genome sequence of Schizosaccharomyces pombe.</title>
        <authorList>
            <person name="Wood V."/>
            <person name="Gwilliam R."/>
            <person name="Rajandream M.A."/>
            <person name="Lyne M.H."/>
            <person name="Lyne R."/>
            <person name="Stewart A."/>
            <person name="Sgouros J.G."/>
            <person name="Peat N."/>
            <person name="Hayles J."/>
            <person name="Baker S.G."/>
            <person name="Basham D."/>
            <person name="Bowman S."/>
            <person name="Brooks K."/>
            <person name="Brown D."/>
            <person name="Brown S."/>
            <person name="Chillingworth T."/>
            <person name="Churcher C.M."/>
            <person name="Collins M."/>
            <person name="Connor R."/>
            <person name="Cronin A."/>
            <person name="Davis P."/>
            <person name="Feltwell T."/>
            <person name="Fraser A."/>
            <person name="Gentles S."/>
            <person name="Goble A."/>
            <person name="Hamlin N."/>
            <person name="Harris D.E."/>
            <person name="Hidalgo J."/>
            <person name="Hodgson G."/>
            <person name="Holroyd S."/>
            <person name="Hornsby T."/>
            <person name="Howarth S."/>
            <person name="Huckle E.J."/>
            <person name="Hunt S."/>
            <person name="Jagels K."/>
            <person name="James K.D."/>
            <person name="Jones L."/>
            <person name="Jones M."/>
            <person name="Leather S."/>
            <person name="McDonald S."/>
            <person name="McLean J."/>
            <person name="Mooney P."/>
            <person name="Moule S."/>
            <person name="Mungall K.L."/>
            <person name="Murphy L.D."/>
            <person name="Niblett D."/>
            <person name="Odell C."/>
            <person name="Oliver K."/>
            <person name="O'Neil S."/>
            <person name="Pearson D."/>
            <person name="Quail M.A."/>
            <person name="Rabbinowitsch E."/>
            <person name="Rutherford K.M."/>
            <person name="Rutter S."/>
            <person name="Saunders D."/>
            <person name="Seeger K."/>
            <person name="Sharp S."/>
            <person name="Skelton J."/>
            <person name="Simmonds M.N."/>
            <person name="Squares R."/>
            <person name="Squares S."/>
            <person name="Stevens K."/>
            <person name="Taylor K."/>
            <person name="Taylor R.G."/>
            <person name="Tivey A."/>
            <person name="Walsh S.V."/>
            <person name="Warren T."/>
            <person name="Whitehead S."/>
            <person name="Woodward J.R."/>
            <person name="Volckaert G."/>
            <person name="Aert R."/>
            <person name="Robben J."/>
            <person name="Grymonprez B."/>
            <person name="Weltjens I."/>
            <person name="Vanstreels E."/>
            <person name="Rieger M."/>
            <person name="Schaefer M."/>
            <person name="Mueller-Auer S."/>
            <person name="Gabel C."/>
            <person name="Fuchs M."/>
            <person name="Duesterhoeft A."/>
            <person name="Fritzc C."/>
            <person name="Holzer E."/>
            <person name="Moestl D."/>
            <person name="Hilbert H."/>
            <person name="Borzym K."/>
            <person name="Langer I."/>
            <person name="Beck A."/>
            <person name="Lehrach H."/>
            <person name="Reinhardt R."/>
            <person name="Pohl T.M."/>
            <person name="Eger P."/>
            <person name="Zimmermann W."/>
            <person name="Wedler H."/>
            <person name="Wambutt R."/>
            <person name="Purnelle B."/>
            <person name="Goffeau A."/>
            <person name="Cadieu E."/>
            <person name="Dreano S."/>
            <person name="Gloux S."/>
            <person name="Lelaure V."/>
            <person name="Mottier S."/>
            <person name="Galibert F."/>
            <person name="Aves S.J."/>
            <person name="Xiang Z."/>
            <person name="Hunt C."/>
            <person name="Moore K."/>
            <person name="Hurst S.M."/>
            <person name="Lucas M."/>
            <person name="Rochet M."/>
            <person name="Gaillardin C."/>
            <person name="Tallada V.A."/>
            <person name="Garzon A."/>
            <person name="Thode G."/>
            <person name="Daga R.R."/>
            <person name="Cruzado L."/>
            <person name="Jimenez J."/>
            <person name="Sanchez M."/>
            <person name="del Rey F."/>
            <person name="Benito J."/>
            <person name="Dominguez A."/>
            <person name="Revuelta J.L."/>
            <person name="Moreno S."/>
            <person name="Armstrong J."/>
            <person name="Forsburg S.L."/>
            <person name="Cerutti L."/>
            <person name="Lowe T."/>
            <person name="McCombie W.R."/>
            <person name="Paulsen I."/>
            <person name="Potashkin J."/>
            <person name="Shpakovski G.V."/>
            <person name="Ussery D."/>
            <person name="Barrell B.G."/>
            <person name="Nurse P."/>
        </authorList>
    </citation>
    <scope>NUCLEOTIDE SEQUENCE [LARGE SCALE GENOMIC DNA]</scope>
    <source>
        <strain>972 / ATCC 24843</strain>
    </source>
</reference>
<reference key="2">
    <citation type="journal article" date="2005" name="EMBO J.">
        <title>Molecular analysis of kinetochore architecture in fission yeast.</title>
        <authorList>
            <person name="Liu X."/>
            <person name="McLeod I."/>
            <person name="Anderson S."/>
            <person name="Yates J.R. III"/>
            <person name="He X."/>
        </authorList>
    </citation>
    <scope>FUNCTION</scope>
    <scope>IDENTIFICATION IN THE KMN NETWORK</scope>
</reference>
<reference key="3">
    <citation type="journal article" date="2006" name="Mol. Biol. Cell">
        <title>Reconstruction of the kinetochore during meiosis in fission yeast Schizosaccharomyces pombe.</title>
        <authorList>
            <person name="Hayashi A."/>
            <person name="Asakawa H."/>
            <person name="Haraguchi T."/>
            <person name="Hiraoka Y."/>
        </authorList>
    </citation>
    <scope>FUNCTION</scope>
    <scope>IDENTIFICATION IN THE KMN NETWORK</scope>
</reference>
<reference key="4">
    <citation type="journal article" date="2006" name="Nat. Biotechnol.">
        <title>ORFeome cloning and global analysis of protein localization in the fission yeast Schizosaccharomyces pombe.</title>
        <authorList>
            <person name="Matsuyama A."/>
            <person name="Arai R."/>
            <person name="Yashiroda Y."/>
            <person name="Shirai A."/>
            <person name="Kamata A."/>
            <person name="Sekido S."/>
            <person name="Kobayashi Y."/>
            <person name="Hashimoto A."/>
            <person name="Hamamoto M."/>
            <person name="Hiraoka Y."/>
            <person name="Horinouchi S."/>
            <person name="Yoshida M."/>
        </authorList>
    </citation>
    <scope>SUBCELLULAR LOCATION [LARGE SCALE ANALYSIS]</scope>
</reference>
<reference key="5">
    <citation type="journal article" date="2012" name="Curr. Biol.">
        <title>Phosphodependent recruitment of Bub1 and Bub3 to Spc7/KNL1 by Mph1 kinase maintains the spindle checkpoint.</title>
        <authorList>
            <person name="Shepperd L.A."/>
            <person name="Meadows J.C."/>
            <person name="Sochaj A.M."/>
            <person name="Lancaster T.C."/>
            <person name="Zou J."/>
            <person name="Buttrick G.J."/>
            <person name="Rappsilber J."/>
            <person name="Hardwick K.G."/>
            <person name="Millar J.B."/>
        </authorList>
    </citation>
    <scope>FUNCTION</scope>
    <scope>INTERACTION WITH BUB1</scope>
    <scope>MELT MOTIF</scope>
    <scope>PHOSPHORYLATION AT THR-453 AND THR-507</scope>
</reference>
<reference key="6">
    <citation type="journal article" date="2012" name="Mol. Cell. Biol.">
        <title>Sos7, an essential component of the conserved Schizosaccharomyces pombe Ndc80-MIND-Spc7 complex, identifies a new family of fungal kinetochore proteins.</title>
        <authorList>
            <person name="Jakopec V."/>
            <person name="Topolski B."/>
            <person name="Fleig U."/>
        </authorList>
    </citation>
    <scope>INTERACTION WITH SOS7</scope>
</reference>
<reference key="7">
    <citation type="journal article" date="2012" name="Nat. Cell Biol.">
        <title>MPS1/Mph1 phosphorylates the kinetochore protein KNL1/Spc7 to recruit SAC components.</title>
        <authorList>
            <person name="Yamagishi Y."/>
            <person name="Yang C.H."/>
            <person name="Tanno Y."/>
            <person name="Watanabe Y."/>
        </authorList>
    </citation>
    <scope>FUNCTION</scope>
    <scope>INTERACTION WITH BUB1 AND BUB3</scope>
    <scope>MELT MOTIF</scope>
    <scope>PHOSPHORYLATION AT THR-257</scope>
</reference>
<accession>O59757</accession>
<feature type="chain" id="PRO_0000290644" description="Outer kinetochore KNL1 complex subunit spc7">
    <location>
        <begin position="1"/>
        <end position="1364"/>
    </location>
</feature>
<feature type="region of interest" description="Disordered" evidence="3">
    <location>
        <begin position="1"/>
        <end position="36"/>
    </location>
</feature>
<feature type="region of interest" description="Disordered" evidence="3">
    <location>
        <begin position="124"/>
        <end position="190"/>
    </location>
</feature>
<feature type="region of interest" description="Disordered" evidence="3">
    <location>
        <begin position="202"/>
        <end position="223"/>
    </location>
</feature>
<feature type="region of interest" description="Disordered" evidence="3">
    <location>
        <begin position="289"/>
        <end position="334"/>
    </location>
</feature>
<feature type="region of interest" description="Disordered" evidence="3">
    <location>
        <begin position="456"/>
        <end position="503"/>
    </location>
</feature>
<feature type="region of interest" description="Disordered" evidence="3">
    <location>
        <begin position="564"/>
        <end position="643"/>
    </location>
</feature>
<feature type="region of interest" description="Disordered" evidence="3">
    <location>
        <begin position="697"/>
        <end position="837"/>
    </location>
</feature>
<feature type="coiled-coil region" evidence="1">
    <location>
        <begin position="1075"/>
        <end position="1155"/>
    </location>
</feature>
<feature type="short sequence motif" description="MELT; degenerate" evidence="12">
    <location>
        <begin position="254"/>
        <end position="257"/>
    </location>
</feature>
<feature type="short sequence motif" description="MELT; degenerate" evidence="12">
    <location>
        <begin position="450"/>
        <end position="453"/>
    </location>
</feature>
<feature type="short sequence motif" description="MELT; degenerate" evidence="12">
    <location>
        <begin position="504"/>
        <end position="507"/>
    </location>
</feature>
<feature type="short sequence motif" description="Nuclear localization signal" evidence="2">
    <location>
        <begin position="1091"/>
        <end position="1105"/>
    </location>
</feature>
<feature type="compositionally biased region" description="Polar residues" evidence="3">
    <location>
        <begin position="1"/>
        <end position="15"/>
    </location>
</feature>
<feature type="compositionally biased region" description="Basic and acidic residues" evidence="3">
    <location>
        <begin position="124"/>
        <end position="136"/>
    </location>
</feature>
<feature type="compositionally biased region" description="Polar residues" evidence="3">
    <location>
        <begin position="157"/>
        <end position="169"/>
    </location>
</feature>
<feature type="compositionally biased region" description="Low complexity" evidence="3">
    <location>
        <begin position="170"/>
        <end position="181"/>
    </location>
</feature>
<feature type="compositionally biased region" description="Low complexity" evidence="3">
    <location>
        <begin position="300"/>
        <end position="310"/>
    </location>
</feature>
<feature type="compositionally biased region" description="Basic and acidic residues" evidence="3">
    <location>
        <begin position="318"/>
        <end position="328"/>
    </location>
</feature>
<feature type="compositionally biased region" description="Polar residues" evidence="3">
    <location>
        <begin position="471"/>
        <end position="481"/>
    </location>
</feature>
<feature type="compositionally biased region" description="Basic and acidic residues" evidence="3">
    <location>
        <begin position="566"/>
        <end position="585"/>
    </location>
</feature>
<feature type="compositionally biased region" description="Polar residues" evidence="3">
    <location>
        <begin position="586"/>
        <end position="617"/>
    </location>
</feature>
<feature type="compositionally biased region" description="Basic and acidic residues" evidence="3">
    <location>
        <begin position="719"/>
        <end position="730"/>
    </location>
</feature>
<feature type="compositionally biased region" description="Polar residues" evidence="3">
    <location>
        <begin position="747"/>
        <end position="773"/>
    </location>
</feature>
<feature type="compositionally biased region" description="Basic and acidic residues" evidence="3">
    <location>
        <begin position="791"/>
        <end position="802"/>
    </location>
</feature>
<feature type="compositionally biased region" description="Polar residues" evidence="3">
    <location>
        <begin position="808"/>
        <end position="820"/>
    </location>
</feature>
<feature type="modified residue" description="Phosphothreonine; by mph1" evidence="8">
    <location>
        <position position="257"/>
    </location>
</feature>
<feature type="modified residue" description="Phosphothreonine; by mph1" evidence="7">
    <location>
        <position position="453"/>
    </location>
</feature>
<feature type="modified residue" description="Phosphothreonine; by mph1" evidence="7 13">
    <location>
        <position position="507"/>
    </location>
</feature>